<gene>
    <name evidence="1" type="primary">foxe1</name>
</gene>
<organism>
    <name type="scientific">Xenopus laevis</name>
    <name type="common">African clawed frog</name>
    <dbReference type="NCBI Taxonomy" id="8355"/>
    <lineage>
        <taxon>Eukaryota</taxon>
        <taxon>Metazoa</taxon>
        <taxon>Chordata</taxon>
        <taxon>Craniata</taxon>
        <taxon>Vertebrata</taxon>
        <taxon>Euteleostomi</taxon>
        <taxon>Amphibia</taxon>
        <taxon>Batrachia</taxon>
        <taxon>Anura</taxon>
        <taxon>Pipoidea</taxon>
        <taxon>Pipidae</taxon>
        <taxon>Xenopodinae</taxon>
        <taxon>Xenopus</taxon>
        <taxon>Xenopus</taxon>
    </lineage>
</organism>
<evidence type="ECO:0000250" key="1">
    <source>
        <dbReference type="UniProtKB" id="O00358"/>
    </source>
</evidence>
<evidence type="ECO:0000255" key="2">
    <source>
        <dbReference type="PROSITE-ProRule" id="PRU00089"/>
    </source>
</evidence>
<evidence type="ECO:0000256" key="3">
    <source>
        <dbReference type="SAM" id="MobiDB-lite"/>
    </source>
</evidence>
<evidence type="ECO:0000269" key="4">
    <source>
    </source>
</evidence>
<evidence type="ECO:0000305" key="5"/>
<evidence type="ECO:0000312" key="6">
    <source>
        <dbReference type="EMBL" id="AAS82575.1"/>
    </source>
</evidence>
<comment type="function">
    <text evidence="1">Transcription factor that binds consensus sites on a variety of gene promoters and activate their transcription.</text>
</comment>
<comment type="subcellular location">
    <subcellularLocation>
        <location evidence="1">Nucleus</location>
    </subcellularLocation>
</comment>
<comment type="tissue specificity">
    <text evidence="4">First expressed at late neural tube and early tailbud stages in the hypophyseal placode. Expression continues in the developing pituitary at late tailbud stages. As development progresses, expressed in the mesoderm of the branchial arches. At stage 38, expressed in the developing thyroid and in the pharyngeal endoderm.</text>
</comment>
<feature type="chain" id="PRO_0000259399" description="Forkhead box protein E1">
    <location>
        <begin position="1"/>
        <end position="379"/>
    </location>
</feature>
<feature type="DNA-binding region" description="Fork-head" evidence="2">
    <location>
        <begin position="66"/>
        <end position="160"/>
    </location>
</feature>
<feature type="region of interest" description="Disordered" evidence="3">
    <location>
        <begin position="1"/>
        <end position="65"/>
    </location>
</feature>
<feature type="region of interest" description="Disordered" evidence="3">
    <location>
        <begin position="239"/>
        <end position="265"/>
    </location>
</feature>
<feature type="compositionally biased region" description="Polar residues" evidence="3">
    <location>
        <begin position="1"/>
        <end position="11"/>
    </location>
</feature>
<feature type="compositionally biased region" description="Basic residues" evidence="3">
    <location>
        <begin position="54"/>
        <end position="63"/>
    </location>
</feature>
<feature type="compositionally biased region" description="Low complexity" evidence="3">
    <location>
        <begin position="251"/>
        <end position="265"/>
    </location>
</feature>
<dbReference type="EMBL" id="AY509892">
    <property type="protein sequence ID" value="AAS82575.1"/>
    <property type="molecule type" value="mRNA"/>
</dbReference>
<dbReference type="SMR" id="Q5J3Q5"/>
<dbReference type="KEGG" id="xla:496399"/>
<dbReference type="AGR" id="Xenbase:XB-GENE-865189"/>
<dbReference type="CTD" id="496399"/>
<dbReference type="Xenbase" id="XB-GENE-865189">
    <property type="gene designation" value="foxe1.L"/>
</dbReference>
<dbReference type="OMA" id="HETPVFS"/>
<dbReference type="OrthoDB" id="5402974at2759"/>
<dbReference type="Proteomes" id="UP000186698">
    <property type="component" value="Chromosome 1L"/>
</dbReference>
<dbReference type="Bgee" id="496399">
    <property type="expression patterns" value="Expressed in egg cell and 3 other cell types or tissues"/>
</dbReference>
<dbReference type="GO" id="GO:0005634">
    <property type="term" value="C:nucleus"/>
    <property type="evidence" value="ECO:0000250"/>
    <property type="project" value="UniProtKB"/>
</dbReference>
<dbReference type="GO" id="GO:0000981">
    <property type="term" value="F:DNA-binding transcription factor activity, RNA polymerase II-specific"/>
    <property type="evidence" value="ECO:0000250"/>
    <property type="project" value="UniProtKB"/>
</dbReference>
<dbReference type="GO" id="GO:0000978">
    <property type="term" value="F:RNA polymerase II cis-regulatory region sequence-specific DNA binding"/>
    <property type="evidence" value="ECO:0000318"/>
    <property type="project" value="GO_Central"/>
</dbReference>
<dbReference type="GO" id="GO:0043565">
    <property type="term" value="F:sequence-specific DNA binding"/>
    <property type="evidence" value="ECO:0000250"/>
    <property type="project" value="UniProtKB"/>
</dbReference>
<dbReference type="GO" id="GO:0009653">
    <property type="term" value="P:anatomical structure morphogenesis"/>
    <property type="evidence" value="ECO:0000318"/>
    <property type="project" value="GO_Central"/>
</dbReference>
<dbReference type="GO" id="GO:0030154">
    <property type="term" value="P:cell differentiation"/>
    <property type="evidence" value="ECO:0000318"/>
    <property type="project" value="GO_Central"/>
</dbReference>
<dbReference type="GO" id="GO:0006357">
    <property type="term" value="P:regulation of transcription by RNA polymerase II"/>
    <property type="evidence" value="ECO:0000250"/>
    <property type="project" value="UniProtKB"/>
</dbReference>
<dbReference type="CDD" id="cd20019">
    <property type="entry name" value="FH_FOXE"/>
    <property type="match status" value="1"/>
</dbReference>
<dbReference type="FunFam" id="1.10.10.10:FF:000201">
    <property type="entry name" value="Forkhead box E1"/>
    <property type="match status" value="1"/>
</dbReference>
<dbReference type="Gene3D" id="1.10.10.10">
    <property type="entry name" value="Winged helix-like DNA-binding domain superfamily/Winged helix DNA-binding domain"/>
    <property type="match status" value="1"/>
</dbReference>
<dbReference type="InterPro" id="IPR001766">
    <property type="entry name" value="Fork_head_dom"/>
</dbReference>
<dbReference type="InterPro" id="IPR050211">
    <property type="entry name" value="FOX_domain-containing"/>
</dbReference>
<dbReference type="InterPro" id="IPR030456">
    <property type="entry name" value="TF_fork_head_CS_2"/>
</dbReference>
<dbReference type="InterPro" id="IPR036388">
    <property type="entry name" value="WH-like_DNA-bd_sf"/>
</dbReference>
<dbReference type="InterPro" id="IPR036390">
    <property type="entry name" value="WH_DNA-bd_sf"/>
</dbReference>
<dbReference type="PANTHER" id="PTHR11829">
    <property type="entry name" value="FORKHEAD BOX PROTEIN"/>
    <property type="match status" value="1"/>
</dbReference>
<dbReference type="PANTHER" id="PTHR11829:SF392">
    <property type="entry name" value="FORKHEAD BOX PROTEIN E1"/>
    <property type="match status" value="1"/>
</dbReference>
<dbReference type="Pfam" id="PF00250">
    <property type="entry name" value="Forkhead"/>
    <property type="match status" value="1"/>
</dbReference>
<dbReference type="PRINTS" id="PR00053">
    <property type="entry name" value="FORKHEAD"/>
</dbReference>
<dbReference type="SMART" id="SM00339">
    <property type="entry name" value="FH"/>
    <property type="match status" value="1"/>
</dbReference>
<dbReference type="SUPFAM" id="SSF46785">
    <property type="entry name" value="Winged helix' DNA-binding domain"/>
    <property type="match status" value="1"/>
</dbReference>
<dbReference type="PROSITE" id="PS00658">
    <property type="entry name" value="FORK_HEAD_2"/>
    <property type="match status" value="1"/>
</dbReference>
<dbReference type="PROSITE" id="PS50039">
    <property type="entry name" value="FORK_HEAD_3"/>
    <property type="match status" value="1"/>
</dbReference>
<keyword id="KW-0238">DNA-binding</keyword>
<keyword id="KW-0539">Nucleus</keyword>
<keyword id="KW-1185">Reference proteome</keyword>
<keyword id="KW-0804">Transcription</keyword>
<keyword id="KW-0805">Transcription regulation</keyword>
<accession>Q5J3Q5</accession>
<proteinExistence type="evidence at transcript level"/>
<sequence length="379" mass="41708">MTAESQQSPTRATAAGAGLQQTSGFTMPVVKVEKDPAPEASMSNGGSEVDDTHKGRRRKRPLQKGKPPYSYIALIAMSIANSADRKLTLGGIYKFITERFPFYRDNSKKWQNSIRHNLTLNDCFIKIPREPGRPGKGNYWALDPNAEDMFDSGSFLRRRKRFKRTDLTTYPAYIHDTSMFSPLQVARATYPNTVYPNMTMSPNYSQQIAPHSSVYYPSSSPAFSSAQPRVFSINTLIGHSGSEHAQPPNRSISPEVNSTSSSSCNYGGSAYSSQAGSGTMLPRSTNPVPYSYSVPNSHLQMNQSTYTHSNAQLFGSASRLPMPTSPPMNSDTVDFYGRMSPGQYTSLATYNSNGQLGGTNAYLRHATYSGNMERFVPAV</sequence>
<protein>
    <recommendedName>
        <fullName>Forkhead box protein E1</fullName>
        <shortName>FoxE1</shortName>
    </recommendedName>
</protein>
<reference evidence="5 6" key="1">
    <citation type="journal article" date="2005" name="Int. J. Dev. Biol.">
        <title>Xenopus laevis FoxE1 is primarily expressed in the developing pituitary and thyroid.</title>
        <authorList>
            <person name="El-Hodiri H.M."/>
            <person name="Seufert D.W."/>
            <person name="Nekkalapudi S."/>
            <person name="Prescott N.L."/>
            <person name="Kelly L.E."/>
            <person name="Jamrich M."/>
        </authorList>
    </citation>
    <scope>NUCLEOTIDE SEQUENCE [MRNA]</scope>
    <scope>TISSUE SPECIFICITY</scope>
    <source>
        <tissue evidence="4">Embryonic head</tissue>
    </source>
</reference>
<name>FOXE1_XENLA</name>